<organism>
    <name type="scientific">Methanosphaerula palustris (strain ATCC BAA-1556 / DSM 19958 / E1-9c)</name>
    <dbReference type="NCBI Taxonomy" id="521011"/>
    <lineage>
        <taxon>Archaea</taxon>
        <taxon>Methanobacteriati</taxon>
        <taxon>Methanobacteriota</taxon>
        <taxon>Stenosarchaea group</taxon>
        <taxon>Methanomicrobia</taxon>
        <taxon>Methanomicrobiales</taxon>
        <taxon>Methanoregulaceae</taxon>
        <taxon>Methanosphaerula</taxon>
    </lineage>
</organism>
<reference key="1">
    <citation type="journal article" date="2015" name="Genome Announc.">
        <title>Complete Genome Sequence of Methanosphaerula palustris E1-9CT, a Hydrogenotrophic Methanogen Isolated from a Minerotrophic Fen Peatland.</title>
        <authorList>
            <person name="Cadillo-Quiroz H."/>
            <person name="Browne P."/>
            <person name="Kyrpides N."/>
            <person name="Woyke T."/>
            <person name="Goodwin L."/>
            <person name="Detter C."/>
            <person name="Yavitt J.B."/>
            <person name="Zinder S.H."/>
        </authorList>
    </citation>
    <scope>NUCLEOTIDE SEQUENCE [LARGE SCALE GENOMIC DNA]</scope>
    <source>
        <strain>ATCC BAA-1556 / DSM 19958 / E1-9c</strain>
    </source>
</reference>
<feature type="chain" id="PRO_0000406272" description="FAD synthase">
    <location>
        <begin position="1"/>
        <end position="153"/>
    </location>
</feature>
<feature type="binding site" evidence="1">
    <location>
        <begin position="9"/>
        <end position="10"/>
    </location>
    <ligand>
        <name>ATP</name>
        <dbReference type="ChEBI" id="CHEBI:30616"/>
    </ligand>
</feature>
<feature type="binding site" evidence="1">
    <location>
        <begin position="14"/>
        <end position="17"/>
    </location>
    <ligand>
        <name>ATP</name>
        <dbReference type="ChEBI" id="CHEBI:30616"/>
    </ligand>
</feature>
<feature type="binding site" evidence="1">
    <location>
        <position position="92"/>
    </location>
    <ligand>
        <name>ATP</name>
        <dbReference type="ChEBI" id="CHEBI:30616"/>
    </ligand>
</feature>
<feature type="binding site" evidence="1">
    <location>
        <position position="119"/>
    </location>
    <ligand>
        <name>ATP</name>
        <dbReference type="ChEBI" id="CHEBI:30616"/>
    </ligand>
</feature>
<sequence>MRRIVATGTFDLLHPGHLFYLQESKKLGDELYVIVARDRNVKHKPRPIIPEEQRLQMVAALKPVDHALLGDTTDMFRPIEAIRPDVITLGFNQNFDPAVLTEALKARSLSAEVVRIGGYGDRVLCSSRRIVQRVIETRGPSLRVGQNTDPEDL</sequence>
<comment type="function">
    <text evidence="1">Catalyzes the transfer of the AMP portion of ATP to flavin mononucleotide (FMN) to produce flavin adenine dinucleotide (FAD) coenzyme.</text>
</comment>
<comment type="catalytic activity">
    <reaction evidence="1">
        <text>FMN + ATP + H(+) = FAD + diphosphate</text>
        <dbReference type="Rhea" id="RHEA:17237"/>
        <dbReference type="ChEBI" id="CHEBI:15378"/>
        <dbReference type="ChEBI" id="CHEBI:30616"/>
        <dbReference type="ChEBI" id="CHEBI:33019"/>
        <dbReference type="ChEBI" id="CHEBI:57692"/>
        <dbReference type="ChEBI" id="CHEBI:58210"/>
        <dbReference type="EC" id="2.7.7.2"/>
    </reaction>
</comment>
<comment type="cofactor">
    <cofactor evidence="1">
        <name>a divalent metal cation</name>
        <dbReference type="ChEBI" id="CHEBI:60240"/>
    </cofactor>
</comment>
<comment type="pathway">
    <text evidence="1">Cofactor biosynthesis; FAD biosynthesis; FAD from FMN: step 1/1.</text>
</comment>
<comment type="subunit">
    <text evidence="1">Homodimer.</text>
</comment>
<comment type="similarity">
    <text evidence="1">Belongs to the archaeal FAD synthase family.</text>
</comment>
<proteinExistence type="inferred from homology"/>
<keyword id="KW-0067">ATP-binding</keyword>
<keyword id="KW-0274">FAD</keyword>
<keyword id="KW-0285">Flavoprotein</keyword>
<keyword id="KW-0288">FMN</keyword>
<keyword id="KW-0547">Nucleotide-binding</keyword>
<keyword id="KW-0548">Nucleotidyltransferase</keyword>
<keyword id="KW-1185">Reference proteome</keyword>
<keyword id="KW-0808">Transferase</keyword>
<evidence type="ECO:0000255" key="1">
    <source>
        <dbReference type="HAMAP-Rule" id="MF_02115"/>
    </source>
</evidence>
<protein>
    <recommendedName>
        <fullName evidence="1">FAD synthase</fullName>
        <ecNumber evidence="1">2.7.7.2</ecNumber>
    </recommendedName>
    <alternativeName>
        <fullName evidence="1">FMN adenylyltransferase</fullName>
    </alternativeName>
    <alternativeName>
        <fullName evidence="1">Flavin adenine dinucleotide synthase</fullName>
    </alternativeName>
</protein>
<dbReference type="EC" id="2.7.7.2" evidence="1"/>
<dbReference type="EMBL" id="CP001338">
    <property type="protein sequence ID" value="ACL15692.1"/>
    <property type="molecule type" value="Genomic_DNA"/>
</dbReference>
<dbReference type="RefSeq" id="WP_012617011.1">
    <property type="nucleotide sequence ID" value="NC_011832.1"/>
</dbReference>
<dbReference type="SMR" id="B8GJN8"/>
<dbReference type="STRING" id="521011.Mpal_0310"/>
<dbReference type="GeneID" id="7272611"/>
<dbReference type="KEGG" id="mpl:Mpal_0310"/>
<dbReference type="eggNOG" id="arCOG01222">
    <property type="taxonomic scope" value="Archaea"/>
</dbReference>
<dbReference type="HOGENOM" id="CLU_034585_2_1_2"/>
<dbReference type="OrthoDB" id="1912at2157"/>
<dbReference type="UniPathway" id="UPA00277">
    <property type="reaction ID" value="UER00407"/>
</dbReference>
<dbReference type="Proteomes" id="UP000002457">
    <property type="component" value="Chromosome"/>
</dbReference>
<dbReference type="GO" id="GO:0005524">
    <property type="term" value="F:ATP binding"/>
    <property type="evidence" value="ECO:0007669"/>
    <property type="project" value="UniProtKB-UniRule"/>
</dbReference>
<dbReference type="GO" id="GO:0003919">
    <property type="term" value="F:FMN adenylyltransferase activity"/>
    <property type="evidence" value="ECO:0007669"/>
    <property type="project" value="UniProtKB-UniRule"/>
</dbReference>
<dbReference type="GO" id="GO:0006747">
    <property type="term" value="P:FAD biosynthetic process"/>
    <property type="evidence" value="ECO:0007669"/>
    <property type="project" value="UniProtKB-UniRule"/>
</dbReference>
<dbReference type="GO" id="GO:0046444">
    <property type="term" value="P:FMN metabolic process"/>
    <property type="evidence" value="ECO:0007669"/>
    <property type="project" value="UniProtKB-UniRule"/>
</dbReference>
<dbReference type="CDD" id="cd02170">
    <property type="entry name" value="cytidylyltransferase"/>
    <property type="match status" value="1"/>
</dbReference>
<dbReference type="Gene3D" id="3.40.50.620">
    <property type="entry name" value="HUPs"/>
    <property type="match status" value="1"/>
</dbReference>
<dbReference type="HAMAP" id="MF_02115">
    <property type="entry name" value="FAD_synth_arch"/>
    <property type="match status" value="1"/>
</dbReference>
<dbReference type="InterPro" id="IPR050385">
    <property type="entry name" value="Archaeal_FAD_synthase"/>
</dbReference>
<dbReference type="InterPro" id="IPR004821">
    <property type="entry name" value="Cyt_trans-like"/>
</dbReference>
<dbReference type="InterPro" id="IPR024902">
    <property type="entry name" value="FAD_synth_RibL"/>
</dbReference>
<dbReference type="InterPro" id="IPR014729">
    <property type="entry name" value="Rossmann-like_a/b/a_fold"/>
</dbReference>
<dbReference type="NCBIfam" id="TIGR00125">
    <property type="entry name" value="cyt_tran_rel"/>
    <property type="match status" value="1"/>
</dbReference>
<dbReference type="PANTHER" id="PTHR43793">
    <property type="entry name" value="FAD SYNTHASE"/>
    <property type="match status" value="1"/>
</dbReference>
<dbReference type="PANTHER" id="PTHR43793:SF1">
    <property type="entry name" value="FAD SYNTHASE"/>
    <property type="match status" value="1"/>
</dbReference>
<dbReference type="Pfam" id="PF01467">
    <property type="entry name" value="CTP_transf_like"/>
    <property type="match status" value="1"/>
</dbReference>
<dbReference type="SUPFAM" id="SSF52374">
    <property type="entry name" value="Nucleotidylyl transferase"/>
    <property type="match status" value="1"/>
</dbReference>
<accession>B8GJN8</accession>
<name>RIBL_METPE</name>
<gene>
    <name evidence="1" type="primary">ribL</name>
    <name type="ordered locus">Mpal_0310</name>
</gene>